<protein>
    <recommendedName>
        <fullName evidence="1">Acetyl-coenzyme A carboxylase carboxyl transferase subunit beta 2</fullName>
        <shortName evidence="1">ACCase subunit beta 2</shortName>
        <shortName evidence="1">Acetyl-CoA carboxylase carboxyltransferase subunit beta 2</shortName>
        <ecNumber evidence="1">2.1.3.15</ecNumber>
    </recommendedName>
</protein>
<gene>
    <name evidence="1" type="primary">accD2</name>
    <name type="ordered locus">EUBELI_20277</name>
</gene>
<comment type="function">
    <text evidence="1">Component of the acetyl coenzyme A carboxylase (ACC) complex. Biotin carboxylase (BC) catalyzes the carboxylation of biotin on its carrier protein (BCCP) and then the CO(2) group is transferred by the transcarboxylase to acetyl-CoA to form malonyl-CoA.</text>
</comment>
<comment type="catalytic activity">
    <reaction evidence="1">
        <text>N(6)-carboxybiotinyl-L-lysyl-[protein] + acetyl-CoA = N(6)-biotinyl-L-lysyl-[protein] + malonyl-CoA</text>
        <dbReference type="Rhea" id="RHEA:54728"/>
        <dbReference type="Rhea" id="RHEA-COMP:10505"/>
        <dbReference type="Rhea" id="RHEA-COMP:10506"/>
        <dbReference type="ChEBI" id="CHEBI:57288"/>
        <dbReference type="ChEBI" id="CHEBI:57384"/>
        <dbReference type="ChEBI" id="CHEBI:83144"/>
        <dbReference type="ChEBI" id="CHEBI:83145"/>
        <dbReference type="EC" id="2.1.3.15"/>
    </reaction>
</comment>
<comment type="cofactor">
    <cofactor evidence="1">
        <name>Zn(2+)</name>
        <dbReference type="ChEBI" id="CHEBI:29105"/>
    </cofactor>
    <text evidence="1">Binds 1 zinc ion per subunit.</text>
</comment>
<comment type="pathway">
    <text evidence="1">Lipid metabolism; malonyl-CoA biosynthesis; malonyl-CoA from acetyl-CoA: step 1/1.</text>
</comment>
<comment type="subunit">
    <text evidence="1">Acetyl-CoA carboxylase is a heterohexamer composed of biotin carboxyl carrier protein (AccB), biotin carboxylase (AccC) and two subunits each of ACCase subunit alpha (AccA) and ACCase subunit beta (AccD).</text>
</comment>
<comment type="subcellular location">
    <subcellularLocation>
        <location evidence="1">Cytoplasm</location>
    </subcellularLocation>
</comment>
<comment type="similarity">
    <text evidence="1">Belongs to the AccD/PCCB family.</text>
</comment>
<evidence type="ECO:0000255" key="1">
    <source>
        <dbReference type="HAMAP-Rule" id="MF_01395"/>
    </source>
</evidence>
<evidence type="ECO:0000255" key="2">
    <source>
        <dbReference type="PROSITE-ProRule" id="PRU01136"/>
    </source>
</evidence>
<organism>
    <name type="scientific">Lachnospira eligens (strain ATCC 27750 / DSM 3376 / VPI C15-48 / C15-B4)</name>
    <name type="common">Eubacterium eligens</name>
    <dbReference type="NCBI Taxonomy" id="515620"/>
    <lineage>
        <taxon>Bacteria</taxon>
        <taxon>Bacillati</taxon>
        <taxon>Bacillota</taxon>
        <taxon>Clostridia</taxon>
        <taxon>Lachnospirales</taxon>
        <taxon>Lachnospiraceae</taxon>
        <taxon>Lachnospira</taxon>
    </lineage>
</organism>
<keyword id="KW-0067">ATP-binding</keyword>
<keyword id="KW-0963">Cytoplasm</keyword>
<keyword id="KW-0275">Fatty acid biosynthesis</keyword>
<keyword id="KW-0276">Fatty acid metabolism</keyword>
<keyword id="KW-0444">Lipid biosynthesis</keyword>
<keyword id="KW-0443">Lipid metabolism</keyword>
<keyword id="KW-0479">Metal-binding</keyword>
<keyword id="KW-0547">Nucleotide-binding</keyword>
<keyword id="KW-0614">Plasmid</keyword>
<keyword id="KW-1185">Reference proteome</keyword>
<keyword id="KW-0808">Transferase</keyword>
<keyword id="KW-0862">Zinc</keyword>
<keyword id="KW-0863">Zinc-finger</keyword>
<dbReference type="EC" id="2.1.3.15" evidence="1"/>
<dbReference type="EMBL" id="CP001106">
    <property type="protein sequence ID" value="ACR73422.1"/>
    <property type="molecule type" value="Genomic_DNA"/>
</dbReference>
<dbReference type="RefSeq" id="WP_012740550.1">
    <property type="nucleotide sequence ID" value="NC_012780.1"/>
</dbReference>
<dbReference type="SMR" id="C4Z630"/>
<dbReference type="GeneID" id="41357018"/>
<dbReference type="KEGG" id="eel:EUBELI_20277"/>
<dbReference type="eggNOG" id="COG0777">
    <property type="taxonomic scope" value="Bacteria"/>
</dbReference>
<dbReference type="HOGENOM" id="CLU_015486_1_1_9"/>
<dbReference type="UniPathway" id="UPA00655">
    <property type="reaction ID" value="UER00711"/>
</dbReference>
<dbReference type="Proteomes" id="UP000001476">
    <property type="component" value="pEubeli2"/>
</dbReference>
<dbReference type="GO" id="GO:0009317">
    <property type="term" value="C:acetyl-CoA carboxylase complex"/>
    <property type="evidence" value="ECO:0007669"/>
    <property type="project" value="InterPro"/>
</dbReference>
<dbReference type="GO" id="GO:0003989">
    <property type="term" value="F:acetyl-CoA carboxylase activity"/>
    <property type="evidence" value="ECO:0007669"/>
    <property type="project" value="InterPro"/>
</dbReference>
<dbReference type="GO" id="GO:0005524">
    <property type="term" value="F:ATP binding"/>
    <property type="evidence" value="ECO:0007669"/>
    <property type="project" value="UniProtKB-KW"/>
</dbReference>
<dbReference type="GO" id="GO:0016743">
    <property type="term" value="F:carboxyl- or carbamoyltransferase activity"/>
    <property type="evidence" value="ECO:0007669"/>
    <property type="project" value="UniProtKB-UniRule"/>
</dbReference>
<dbReference type="GO" id="GO:0008270">
    <property type="term" value="F:zinc ion binding"/>
    <property type="evidence" value="ECO:0007669"/>
    <property type="project" value="UniProtKB-UniRule"/>
</dbReference>
<dbReference type="GO" id="GO:0006633">
    <property type="term" value="P:fatty acid biosynthetic process"/>
    <property type="evidence" value="ECO:0007669"/>
    <property type="project" value="UniProtKB-KW"/>
</dbReference>
<dbReference type="GO" id="GO:2001295">
    <property type="term" value="P:malonyl-CoA biosynthetic process"/>
    <property type="evidence" value="ECO:0007669"/>
    <property type="project" value="UniProtKB-UniRule"/>
</dbReference>
<dbReference type="Gene3D" id="3.90.226.10">
    <property type="entry name" value="2-enoyl-CoA Hydratase, Chain A, domain 1"/>
    <property type="match status" value="1"/>
</dbReference>
<dbReference type="HAMAP" id="MF_01395">
    <property type="entry name" value="AcetylCoA_CT_beta"/>
    <property type="match status" value="1"/>
</dbReference>
<dbReference type="InterPro" id="IPR034733">
    <property type="entry name" value="AcCoA_carboxyl_beta"/>
</dbReference>
<dbReference type="InterPro" id="IPR000438">
    <property type="entry name" value="Acetyl_CoA_COase_Trfase_b_su"/>
</dbReference>
<dbReference type="InterPro" id="IPR029045">
    <property type="entry name" value="ClpP/crotonase-like_dom_sf"/>
</dbReference>
<dbReference type="InterPro" id="IPR011762">
    <property type="entry name" value="COA_CT_N"/>
</dbReference>
<dbReference type="InterPro" id="IPR041010">
    <property type="entry name" value="Znf-ACC"/>
</dbReference>
<dbReference type="PANTHER" id="PTHR42995">
    <property type="entry name" value="ACETYL-COENZYME A CARBOXYLASE CARBOXYL TRANSFERASE SUBUNIT BETA, CHLOROPLASTIC"/>
    <property type="match status" value="1"/>
</dbReference>
<dbReference type="PANTHER" id="PTHR42995:SF5">
    <property type="entry name" value="ACETYL-COENZYME A CARBOXYLASE CARBOXYL TRANSFERASE SUBUNIT BETA, CHLOROPLASTIC"/>
    <property type="match status" value="1"/>
</dbReference>
<dbReference type="Pfam" id="PF01039">
    <property type="entry name" value="Carboxyl_trans"/>
    <property type="match status" value="1"/>
</dbReference>
<dbReference type="Pfam" id="PF17848">
    <property type="entry name" value="Zn_ribbon_ACC"/>
    <property type="match status" value="1"/>
</dbReference>
<dbReference type="PRINTS" id="PR01070">
    <property type="entry name" value="ACCCTRFRASEB"/>
</dbReference>
<dbReference type="SUPFAM" id="SSF52096">
    <property type="entry name" value="ClpP/crotonase"/>
    <property type="match status" value="1"/>
</dbReference>
<dbReference type="PROSITE" id="PS50980">
    <property type="entry name" value="COA_CT_NTER"/>
    <property type="match status" value="1"/>
</dbReference>
<geneLocation type="plasmid">
    <name>pEubeli2</name>
</geneLocation>
<reference key="1">
    <citation type="journal article" date="2009" name="Proc. Natl. Acad. Sci. U.S.A.">
        <title>Characterizing a model human gut microbiota composed of members of its two dominant bacterial phyla.</title>
        <authorList>
            <person name="Mahowald M.A."/>
            <person name="Rey F.E."/>
            <person name="Seedorf H."/>
            <person name="Turnbaugh P.J."/>
            <person name="Fulton R.S."/>
            <person name="Wollam A."/>
            <person name="Shah N."/>
            <person name="Wang C."/>
            <person name="Magrini V."/>
            <person name="Wilson R.K."/>
            <person name="Cantarel B.L."/>
            <person name="Coutinho P.M."/>
            <person name="Henrissat B."/>
            <person name="Crock L.W."/>
            <person name="Russell A."/>
            <person name="Verberkmoes N.C."/>
            <person name="Hettich R.L."/>
            <person name="Gordon J.I."/>
        </authorList>
    </citation>
    <scope>NUCLEOTIDE SEQUENCE [LARGE SCALE GENOMIC DNA]</scope>
    <source>
        <strain>ATCC 27750 / DSM 3376 / VPI C15-48 / C15-B4</strain>
    </source>
</reference>
<accession>C4Z630</accession>
<proteinExistence type="inferred from homology"/>
<name>ACCD2_LACE2</name>
<sequence>MTVKCNKCKEEINKEDLEKNYYICPLCGKLNRMPAKNRLQMLTEKFDVMFNDQEFTDPIDFPSYKEKYESAREKSGETEGVVCGRGTIGGNDTCIFIMEPNFMMGSMGTVVGDRITALFEYATKNRLPVIGYTVSGGARMQEGALSLMQMAKVSAAAKRHSDAGLLYVVCTTDPTMGGATASFAMLGDIIISEPGAMIGFAGKRVVEQVTGEVLPDNFQSAEFQLKNGFIDDIVPRQEQRAYLANILAIHAETVSA</sequence>
<feature type="chain" id="PRO_0000389739" description="Acetyl-coenzyme A carboxylase carboxyl transferase subunit beta 2">
    <location>
        <begin position="1"/>
        <end position="256"/>
    </location>
</feature>
<feature type="domain" description="CoA carboxyltransferase N-terminal" evidence="2">
    <location>
        <begin position="1"/>
        <end position="256"/>
    </location>
</feature>
<feature type="zinc finger region" description="C4-type" evidence="1">
    <location>
        <begin position="5"/>
        <end position="27"/>
    </location>
</feature>
<feature type="binding site" evidence="1">
    <location>
        <position position="5"/>
    </location>
    <ligand>
        <name>Zn(2+)</name>
        <dbReference type="ChEBI" id="CHEBI:29105"/>
    </ligand>
</feature>
<feature type="binding site" evidence="1">
    <location>
        <position position="8"/>
    </location>
    <ligand>
        <name>Zn(2+)</name>
        <dbReference type="ChEBI" id="CHEBI:29105"/>
    </ligand>
</feature>
<feature type="binding site" evidence="1">
    <location>
        <position position="24"/>
    </location>
    <ligand>
        <name>Zn(2+)</name>
        <dbReference type="ChEBI" id="CHEBI:29105"/>
    </ligand>
</feature>
<feature type="binding site" evidence="1">
    <location>
        <position position="27"/>
    </location>
    <ligand>
        <name>Zn(2+)</name>
        <dbReference type="ChEBI" id="CHEBI:29105"/>
    </ligand>
</feature>